<organism>
    <name type="scientific">Candida glabrata (strain ATCC 2001 / BCRC 20586 / JCM 3761 / NBRC 0622 / NRRL Y-65 / CBS 138)</name>
    <name type="common">Yeast</name>
    <name type="synonym">Nakaseomyces glabratus</name>
    <dbReference type="NCBI Taxonomy" id="284593"/>
    <lineage>
        <taxon>Eukaryota</taxon>
        <taxon>Fungi</taxon>
        <taxon>Dikarya</taxon>
        <taxon>Ascomycota</taxon>
        <taxon>Saccharomycotina</taxon>
        <taxon>Saccharomycetes</taxon>
        <taxon>Saccharomycetales</taxon>
        <taxon>Saccharomycetaceae</taxon>
        <taxon>Nakaseomyces</taxon>
    </lineage>
</organism>
<accession>Q6FU45</accession>
<dbReference type="EMBL" id="CR380952">
    <property type="protein sequence ID" value="CAG59173.1"/>
    <property type="molecule type" value="Genomic_DNA"/>
</dbReference>
<dbReference type="RefSeq" id="XP_446249.1">
    <property type="nucleotide sequence ID" value="XM_446249.1"/>
</dbReference>
<dbReference type="SMR" id="Q6FU45"/>
<dbReference type="FunCoup" id="Q6FU45">
    <property type="interactions" value="1279"/>
</dbReference>
<dbReference type="STRING" id="284593.Q6FU45"/>
<dbReference type="EnsemblFungi" id="CAGL0F06479g-T">
    <property type="protein sequence ID" value="CAGL0F06479g-T-p1"/>
    <property type="gene ID" value="CAGL0F06479g"/>
</dbReference>
<dbReference type="KEGG" id="cgr:2887866"/>
<dbReference type="CGD" id="CAL0129762">
    <property type="gene designation" value="CAGL0F06479g"/>
</dbReference>
<dbReference type="VEuPathDB" id="FungiDB:B1J91_F06479g"/>
<dbReference type="VEuPathDB" id="FungiDB:CAGL0F06479g"/>
<dbReference type="eggNOG" id="KOG1914">
    <property type="taxonomic scope" value="Eukaryota"/>
</dbReference>
<dbReference type="HOGENOM" id="CLU_007630_0_1_1"/>
<dbReference type="InParanoid" id="Q6FU45"/>
<dbReference type="OMA" id="PKRQYFK"/>
<dbReference type="Proteomes" id="UP000002428">
    <property type="component" value="Chromosome F"/>
</dbReference>
<dbReference type="GO" id="GO:0005829">
    <property type="term" value="C:cytosol"/>
    <property type="evidence" value="ECO:0007669"/>
    <property type="project" value="EnsemblFungi"/>
</dbReference>
<dbReference type="GO" id="GO:0005739">
    <property type="term" value="C:mitochondrion"/>
    <property type="evidence" value="ECO:0007669"/>
    <property type="project" value="EnsemblFungi"/>
</dbReference>
<dbReference type="GO" id="GO:0005848">
    <property type="term" value="C:mRNA cleavage stimulating factor complex"/>
    <property type="evidence" value="ECO:0007669"/>
    <property type="project" value="EnsemblFungi"/>
</dbReference>
<dbReference type="GO" id="GO:0003729">
    <property type="term" value="F:mRNA binding"/>
    <property type="evidence" value="ECO:0007669"/>
    <property type="project" value="TreeGrafter"/>
</dbReference>
<dbReference type="GO" id="GO:0031124">
    <property type="term" value="P:mRNA 3'-end processing"/>
    <property type="evidence" value="ECO:0007669"/>
    <property type="project" value="EnsemblFungi"/>
</dbReference>
<dbReference type="GO" id="GO:0072423">
    <property type="term" value="P:response to DNA damage checkpoint signaling"/>
    <property type="evidence" value="ECO:0007669"/>
    <property type="project" value="EnsemblFungi"/>
</dbReference>
<dbReference type="Gene3D" id="1.25.40.1040">
    <property type="match status" value="1"/>
</dbReference>
<dbReference type="Gene3D" id="6.10.250.1660">
    <property type="match status" value="1"/>
</dbReference>
<dbReference type="InterPro" id="IPR003107">
    <property type="entry name" value="HAT"/>
</dbReference>
<dbReference type="InterPro" id="IPR045243">
    <property type="entry name" value="Rna14-like"/>
</dbReference>
<dbReference type="InterPro" id="IPR008847">
    <property type="entry name" value="Suf"/>
</dbReference>
<dbReference type="InterPro" id="IPR011990">
    <property type="entry name" value="TPR-like_helical_dom_sf"/>
</dbReference>
<dbReference type="PANTHER" id="PTHR19980:SF0">
    <property type="entry name" value="CLEAVAGE STIMULATION FACTOR SUBUNIT 3"/>
    <property type="match status" value="1"/>
</dbReference>
<dbReference type="PANTHER" id="PTHR19980">
    <property type="entry name" value="RNA CLEAVAGE STIMULATION FACTOR"/>
    <property type="match status" value="1"/>
</dbReference>
<dbReference type="Pfam" id="PF05843">
    <property type="entry name" value="Suf"/>
    <property type="match status" value="1"/>
</dbReference>
<dbReference type="SMART" id="SM00386">
    <property type="entry name" value="HAT"/>
    <property type="match status" value="6"/>
</dbReference>
<dbReference type="SUPFAM" id="SSF48452">
    <property type="entry name" value="TPR-like"/>
    <property type="match status" value="1"/>
</dbReference>
<gene>
    <name type="primary">RNA14</name>
    <name type="ordered locus">CAGL0F06479g</name>
</gene>
<proteinExistence type="inferred from homology"/>
<protein>
    <recommendedName>
        <fullName>mRNA 3'-end-processing protein RNA14</fullName>
    </recommendedName>
</protein>
<sequence length="646" mass="76307">MSTTNEETQANASKDYSEDALKMSYAAQPLDIMRALKLIEYYESKDDYDNSRKLYAELHERFPLYSPLWTMHLQSELQRNEFDTVEKLLAQCLAGDLENNDLSLWSTYLDYVRRKNNLITGGQEARAVVIKAFKLVMDKCATFEPKASSFWNDYLGFLHQWKPMNKWEEQQRLDMIREVYKKMLCVPFDKLEKMWNQYTLWEQETNTLTARKFIGELSADYMKARSIYQELLNVTANIRRTSPLNLRTANKNNIPQYVLPCKKNDHTQLEAWLKWIAWEKENKLELTEDALKDRVTYVYKQAIQQLLFEPEIWYDYVMYEFDNDAARKNILKVALQANPTSPTLTFKLAECYEVENKSEEVQNCFEKTIDELLRQYKNDNGNDELSSDIIWERKTLTYIYCIYMNTMKRLSGLSAARAVFGKCRKLKKAMTHDIYVENAYLEFQNQNDHKTASKVLELGLKYFGDDGEYINKYMDFLSLLNRGSQMKTLFETSIEKVEDLRQLKKIYVKMIGYESKYGNLNNVYQLEKRFFEKFPDTDLIQLFSTRYKIQDDNKIKNLELTYKLPDIISSDGDPSGVDKSFKKRQIENDENLPDSKRQKSQPLLPKEILDILAVLPKKQYFKNAFLDPSNLVNYLNEQVKLADEEN</sequence>
<feature type="chain" id="PRO_0000238521" description="mRNA 3'-end-processing protein RNA14">
    <location>
        <begin position="1"/>
        <end position="646"/>
    </location>
</feature>
<feature type="repeat" description="HAT 1">
    <location>
        <begin position="46"/>
        <end position="78"/>
    </location>
</feature>
<feature type="repeat" description="HAT 2">
    <location>
        <begin position="80"/>
        <end position="114"/>
    </location>
</feature>
<feature type="repeat" description="HAT 3">
    <location>
        <begin position="128"/>
        <end position="160"/>
    </location>
</feature>
<feature type="repeat" description="HAT 4">
    <location>
        <begin position="171"/>
        <end position="204"/>
    </location>
</feature>
<feature type="repeat" description="HAT 5">
    <location>
        <begin position="249"/>
        <end position="281"/>
    </location>
</feature>
<feature type="repeat" description="HAT 6">
    <location>
        <begin position="290"/>
        <end position="322"/>
    </location>
</feature>
<feature type="region of interest" description="Disordered" evidence="2">
    <location>
        <begin position="571"/>
        <end position="599"/>
    </location>
</feature>
<name>RNA14_CANGA</name>
<reference key="1">
    <citation type="journal article" date="2004" name="Nature">
        <title>Genome evolution in yeasts.</title>
        <authorList>
            <person name="Dujon B."/>
            <person name="Sherman D."/>
            <person name="Fischer G."/>
            <person name="Durrens P."/>
            <person name="Casaregola S."/>
            <person name="Lafontaine I."/>
            <person name="de Montigny J."/>
            <person name="Marck C."/>
            <person name="Neuveglise C."/>
            <person name="Talla E."/>
            <person name="Goffard N."/>
            <person name="Frangeul L."/>
            <person name="Aigle M."/>
            <person name="Anthouard V."/>
            <person name="Babour A."/>
            <person name="Barbe V."/>
            <person name="Barnay S."/>
            <person name="Blanchin S."/>
            <person name="Beckerich J.-M."/>
            <person name="Beyne E."/>
            <person name="Bleykasten C."/>
            <person name="Boisrame A."/>
            <person name="Boyer J."/>
            <person name="Cattolico L."/>
            <person name="Confanioleri F."/>
            <person name="de Daruvar A."/>
            <person name="Despons L."/>
            <person name="Fabre E."/>
            <person name="Fairhead C."/>
            <person name="Ferry-Dumazet H."/>
            <person name="Groppi A."/>
            <person name="Hantraye F."/>
            <person name="Hennequin C."/>
            <person name="Jauniaux N."/>
            <person name="Joyet P."/>
            <person name="Kachouri R."/>
            <person name="Kerrest A."/>
            <person name="Koszul R."/>
            <person name="Lemaire M."/>
            <person name="Lesur I."/>
            <person name="Ma L."/>
            <person name="Muller H."/>
            <person name="Nicaud J.-M."/>
            <person name="Nikolski M."/>
            <person name="Oztas S."/>
            <person name="Ozier-Kalogeropoulos O."/>
            <person name="Pellenz S."/>
            <person name="Potier S."/>
            <person name="Richard G.-F."/>
            <person name="Straub M.-L."/>
            <person name="Suleau A."/>
            <person name="Swennen D."/>
            <person name="Tekaia F."/>
            <person name="Wesolowski-Louvel M."/>
            <person name="Westhof E."/>
            <person name="Wirth B."/>
            <person name="Zeniou-Meyer M."/>
            <person name="Zivanovic Y."/>
            <person name="Bolotin-Fukuhara M."/>
            <person name="Thierry A."/>
            <person name="Bouchier C."/>
            <person name="Caudron B."/>
            <person name="Scarpelli C."/>
            <person name="Gaillardin C."/>
            <person name="Weissenbach J."/>
            <person name="Wincker P."/>
            <person name="Souciet J.-L."/>
        </authorList>
    </citation>
    <scope>NUCLEOTIDE SEQUENCE [LARGE SCALE GENOMIC DNA]</scope>
    <source>
        <strain>ATCC 2001 / BCRC 20586 / JCM 3761 / NBRC 0622 / NRRL Y-65 / CBS 138</strain>
    </source>
</reference>
<keyword id="KW-0963">Cytoplasm</keyword>
<keyword id="KW-0507">mRNA processing</keyword>
<keyword id="KW-0539">Nucleus</keyword>
<keyword id="KW-1185">Reference proteome</keyword>
<keyword id="KW-0677">Repeat</keyword>
<comment type="function">
    <text evidence="1">Component of the cleavage factor IA (CFIA) complex, which is involved in the endonucleolytic cleavage during polyadenylation-dependent pre-mRNA 3'-end formation.</text>
</comment>
<comment type="subcellular location">
    <subcellularLocation>
        <location evidence="1">Nucleus</location>
    </subcellularLocation>
    <subcellularLocation>
        <location evidence="1">Cytoplasm</location>
    </subcellularLocation>
    <text evidence="1">Nucleus and/or cytoplasm.</text>
</comment>
<evidence type="ECO:0000250" key="1"/>
<evidence type="ECO:0000256" key="2">
    <source>
        <dbReference type="SAM" id="MobiDB-lite"/>
    </source>
</evidence>